<feature type="chain" id="PRO_0000311566" description="Putative iron-sulfur cluster insertion protein ErpA">
    <location>
        <begin position="1"/>
        <end position="121"/>
    </location>
</feature>
<feature type="binding site" evidence="1">
    <location>
        <position position="49"/>
    </location>
    <ligand>
        <name>iron-sulfur cluster</name>
        <dbReference type="ChEBI" id="CHEBI:30408"/>
    </ligand>
</feature>
<feature type="binding site" evidence="1">
    <location>
        <position position="113"/>
    </location>
    <ligand>
        <name>iron-sulfur cluster</name>
        <dbReference type="ChEBI" id="CHEBI:30408"/>
    </ligand>
</feature>
<feature type="binding site" evidence="1">
    <location>
        <position position="115"/>
    </location>
    <ligand>
        <name>iron-sulfur cluster</name>
        <dbReference type="ChEBI" id="CHEBI:30408"/>
    </ligand>
</feature>
<protein>
    <recommendedName>
        <fullName evidence="1">Putative iron-sulfur cluster insertion protein ErpA</fullName>
    </recommendedName>
</protein>
<organism>
    <name type="scientific">Verminephrobacter eiseniae (strain EF01-2)</name>
    <dbReference type="NCBI Taxonomy" id="391735"/>
    <lineage>
        <taxon>Bacteria</taxon>
        <taxon>Pseudomonadati</taxon>
        <taxon>Pseudomonadota</taxon>
        <taxon>Betaproteobacteria</taxon>
        <taxon>Burkholderiales</taxon>
        <taxon>Comamonadaceae</taxon>
        <taxon>Verminephrobacter</taxon>
    </lineage>
</organism>
<reference key="1">
    <citation type="submission" date="2006-12" db="EMBL/GenBank/DDBJ databases">
        <title>Complete sequence of chromosome 1 of Verminephrobacter eiseniae EF01-2.</title>
        <authorList>
            <person name="Copeland A."/>
            <person name="Lucas S."/>
            <person name="Lapidus A."/>
            <person name="Barry K."/>
            <person name="Detter J.C."/>
            <person name="Glavina del Rio T."/>
            <person name="Dalin E."/>
            <person name="Tice H."/>
            <person name="Pitluck S."/>
            <person name="Chertkov O."/>
            <person name="Brettin T."/>
            <person name="Bruce D."/>
            <person name="Han C."/>
            <person name="Tapia R."/>
            <person name="Gilna P."/>
            <person name="Schmutz J."/>
            <person name="Larimer F."/>
            <person name="Land M."/>
            <person name="Hauser L."/>
            <person name="Kyrpides N."/>
            <person name="Kim E."/>
            <person name="Stahl D."/>
            <person name="Richardson P."/>
        </authorList>
    </citation>
    <scope>NUCLEOTIDE SEQUENCE [LARGE SCALE GENOMIC DNA]</scope>
    <source>
        <strain>EF01-2</strain>
    </source>
</reference>
<gene>
    <name evidence="1" type="primary">erpA</name>
    <name type="ordered locus">Veis_2642</name>
</gene>
<sequence>MSAVAENIQTGMPAPILFTDSAAAKVAQLIAEEGNPELKLRVFVQGGGCSGFQYGFTFDEITNEDDTTMTKNGVSLLIDAMSYQYLVGAEIDYKEDLQGAQFVIKNPNATTTCGCGSSFSA</sequence>
<accession>A1WL78</accession>
<comment type="function">
    <text evidence="1">Required for insertion of 4Fe-4S clusters.</text>
</comment>
<comment type="cofactor">
    <cofactor evidence="1">
        <name>iron-sulfur cluster</name>
        <dbReference type="ChEBI" id="CHEBI:30408"/>
    </cofactor>
    <text evidence="1">Binds 1 iron-sulfur cluster per subunit.</text>
</comment>
<comment type="subunit">
    <text evidence="1">Homodimer.</text>
</comment>
<comment type="similarity">
    <text evidence="1">Belongs to the HesB/IscA family.</text>
</comment>
<evidence type="ECO:0000255" key="1">
    <source>
        <dbReference type="HAMAP-Rule" id="MF_01380"/>
    </source>
</evidence>
<keyword id="KW-0408">Iron</keyword>
<keyword id="KW-0411">Iron-sulfur</keyword>
<keyword id="KW-0479">Metal-binding</keyword>
<keyword id="KW-1185">Reference proteome</keyword>
<name>ERPA_VEREI</name>
<proteinExistence type="inferred from homology"/>
<dbReference type="EMBL" id="CP000542">
    <property type="protein sequence ID" value="ABM58385.1"/>
    <property type="molecule type" value="Genomic_DNA"/>
</dbReference>
<dbReference type="RefSeq" id="WP_011810384.1">
    <property type="nucleotide sequence ID" value="NC_008786.1"/>
</dbReference>
<dbReference type="SMR" id="A1WL78"/>
<dbReference type="STRING" id="391735.Veis_2642"/>
<dbReference type="GeneID" id="76461154"/>
<dbReference type="KEGG" id="vei:Veis_2642"/>
<dbReference type="eggNOG" id="COG0316">
    <property type="taxonomic scope" value="Bacteria"/>
</dbReference>
<dbReference type="HOGENOM" id="CLU_069054_5_3_4"/>
<dbReference type="OrthoDB" id="9801228at2"/>
<dbReference type="Proteomes" id="UP000000374">
    <property type="component" value="Chromosome"/>
</dbReference>
<dbReference type="GO" id="GO:0051537">
    <property type="term" value="F:2 iron, 2 sulfur cluster binding"/>
    <property type="evidence" value="ECO:0007669"/>
    <property type="project" value="TreeGrafter"/>
</dbReference>
<dbReference type="GO" id="GO:0051539">
    <property type="term" value="F:4 iron, 4 sulfur cluster binding"/>
    <property type="evidence" value="ECO:0007669"/>
    <property type="project" value="TreeGrafter"/>
</dbReference>
<dbReference type="GO" id="GO:0005506">
    <property type="term" value="F:iron ion binding"/>
    <property type="evidence" value="ECO:0007669"/>
    <property type="project" value="UniProtKB-UniRule"/>
</dbReference>
<dbReference type="GO" id="GO:0016226">
    <property type="term" value="P:iron-sulfur cluster assembly"/>
    <property type="evidence" value="ECO:0007669"/>
    <property type="project" value="UniProtKB-UniRule"/>
</dbReference>
<dbReference type="FunFam" id="2.60.300.12:FF:000002">
    <property type="entry name" value="Iron-sulfur cluster insertion protein ErpA"/>
    <property type="match status" value="1"/>
</dbReference>
<dbReference type="Gene3D" id="2.60.300.12">
    <property type="entry name" value="HesB-like domain"/>
    <property type="match status" value="1"/>
</dbReference>
<dbReference type="HAMAP" id="MF_01380">
    <property type="entry name" value="Fe_S_insert_ErpA"/>
    <property type="match status" value="1"/>
</dbReference>
<dbReference type="InterPro" id="IPR000361">
    <property type="entry name" value="FeS_biogenesis"/>
</dbReference>
<dbReference type="InterPro" id="IPR016092">
    <property type="entry name" value="FeS_cluster_insertion"/>
</dbReference>
<dbReference type="InterPro" id="IPR017870">
    <property type="entry name" value="FeS_cluster_insertion_CS"/>
</dbReference>
<dbReference type="InterPro" id="IPR023063">
    <property type="entry name" value="FeS_cluster_insertion_RrpA"/>
</dbReference>
<dbReference type="InterPro" id="IPR035903">
    <property type="entry name" value="HesB-like_dom_sf"/>
</dbReference>
<dbReference type="NCBIfam" id="TIGR00049">
    <property type="entry name" value="iron-sulfur cluster assembly accessory protein"/>
    <property type="match status" value="1"/>
</dbReference>
<dbReference type="NCBIfam" id="NF010147">
    <property type="entry name" value="PRK13623.1"/>
    <property type="match status" value="1"/>
</dbReference>
<dbReference type="PANTHER" id="PTHR43011">
    <property type="entry name" value="IRON-SULFUR CLUSTER ASSEMBLY 2 HOMOLOG, MITOCHONDRIAL"/>
    <property type="match status" value="1"/>
</dbReference>
<dbReference type="PANTHER" id="PTHR43011:SF1">
    <property type="entry name" value="IRON-SULFUR CLUSTER ASSEMBLY 2 HOMOLOG, MITOCHONDRIAL"/>
    <property type="match status" value="1"/>
</dbReference>
<dbReference type="Pfam" id="PF01521">
    <property type="entry name" value="Fe-S_biosyn"/>
    <property type="match status" value="1"/>
</dbReference>
<dbReference type="SUPFAM" id="SSF89360">
    <property type="entry name" value="HesB-like domain"/>
    <property type="match status" value="1"/>
</dbReference>
<dbReference type="PROSITE" id="PS01152">
    <property type="entry name" value="HESB"/>
    <property type="match status" value="1"/>
</dbReference>